<proteinExistence type="inferred from homology"/>
<reference key="1">
    <citation type="journal article" date="2006" name="PLoS Genet.">
        <title>The complete genome sequence and comparative genome analysis of the high pathogenicity Yersinia enterocolitica strain 8081.</title>
        <authorList>
            <person name="Thomson N.R."/>
            <person name="Howard S."/>
            <person name="Wren B.W."/>
            <person name="Holden M.T.G."/>
            <person name="Crossman L."/>
            <person name="Challis G.L."/>
            <person name="Churcher C."/>
            <person name="Mungall K."/>
            <person name="Brooks K."/>
            <person name="Chillingworth T."/>
            <person name="Feltwell T."/>
            <person name="Abdellah Z."/>
            <person name="Hauser H."/>
            <person name="Jagels K."/>
            <person name="Maddison M."/>
            <person name="Moule S."/>
            <person name="Sanders M."/>
            <person name="Whitehead S."/>
            <person name="Quail M.A."/>
            <person name="Dougan G."/>
            <person name="Parkhill J."/>
            <person name="Prentice M.B."/>
        </authorList>
    </citation>
    <scope>NUCLEOTIDE SEQUENCE [LARGE SCALE GENOMIC DNA]</scope>
    <source>
        <strain>NCTC 13174 / 8081</strain>
    </source>
</reference>
<protein>
    <recommendedName>
        <fullName evidence="1">tRNA pseudouridine synthase B</fullName>
        <ecNumber evidence="1">5.4.99.25</ecNumber>
    </recommendedName>
    <alternativeName>
        <fullName evidence="1">tRNA pseudouridine(55) synthase</fullName>
        <shortName evidence="1">Psi55 synthase</shortName>
    </alternativeName>
    <alternativeName>
        <fullName evidence="1">tRNA pseudouridylate synthase</fullName>
    </alternativeName>
    <alternativeName>
        <fullName evidence="1">tRNA-uridine isomerase</fullName>
    </alternativeName>
</protein>
<accession>A1JIX1</accession>
<sequence>MGRPRRRGRDINGVLLLDKPLGLSSNDVLQKVKRLFSANRAGHTGALDPLATGMLPICLGEATKFSQFLLDSDKRYRVVARLGQRTDTSDAEGALISEREVNVTQAQMDAALDSFRGSSQQVPSMYSALKHQGKPLYEYARQGIEVEREARSITVYELLFIRWEGNDLELEIHCSKGTYIRTIIDDLGELLGCGAHVSYLRRLQVATYPSDRMVTLEQLTAIVETAQAEERSPNAELDALLLPMDSAVLNFPEVNLLPAVAAYVKQGQPVHVAGTPGEGMVRITEGEERNFIGIGTIAEDGRVAPKRLVVEHVDGANPVVAGVAAGNTP</sequence>
<organism>
    <name type="scientific">Yersinia enterocolitica serotype O:8 / biotype 1B (strain NCTC 13174 / 8081)</name>
    <dbReference type="NCBI Taxonomy" id="393305"/>
    <lineage>
        <taxon>Bacteria</taxon>
        <taxon>Pseudomonadati</taxon>
        <taxon>Pseudomonadota</taxon>
        <taxon>Gammaproteobacteria</taxon>
        <taxon>Enterobacterales</taxon>
        <taxon>Yersiniaceae</taxon>
        <taxon>Yersinia</taxon>
    </lineage>
</organism>
<evidence type="ECO:0000255" key="1">
    <source>
        <dbReference type="HAMAP-Rule" id="MF_01080"/>
    </source>
</evidence>
<keyword id="KW-0413">Isomerase</keyword>
<keyword id="KW-0819">tRNA processing</keyword>
<feature type="chain" id="PRO_1000084715" description="tRNA pseudouridine synthase B">
    <location>
        <begin position="1"/>
        <end position="329"/>
    </location>
</feature>
<feature type="active site" description="Nucleophile" evidence="1">
    <location>
        <position position="48"/>
    </location>
</feature>
<feature type="binding site" evidence="1">
    <location>
        <position position="43"/>
    </location>
    <ligand>
        <name>substrate</name>
    </ligand>
</feature>
<feature type="binding site" evidence="1">
    <location>
        <position position="76"/>
    </location>
    <ligand>
        <name>substrate</name>
    </ligand>
</feature>
<feature type="binding site" evidence="1">
    <location>
        <position position="179"/>
    </location>
    <ligand>
        <name>substrate</name>
    </ligand>
</feature>
<feature type="binding site" evidence="1">
    <location>
        <position position="200"/>
    </location>
    <ligand>
        <name>substrate</name>
    </ligand>
</feature>
<dbReference type="EC" id="5.4.99.25" evidence="1"/>
<dbReference type="EMBL" id="AM286415">
    <property type="protein sequence ID" value="CAL10562.1"/>
    <property type="molecule type" value="Genomic_DNA"/>
</dbReference>
<dbReference type="RefSeq" id="WP_011815446.1">
    <property type="nucleotide sequence ID" value="NC_008800.1"/>
</dbReference>
<dbReference type="RefSeq" id="YP_001004806.1">
    <property type="nucleotide sequence ID" value="NC_008800.1"/>
</dbReference>
<dbReference type="SMR" id="A1JIX1"/>
<dbReference type="KEGG" id="yen:YE0436"/>
<dbReference type="PATRIC" id="fig|393305.7.peg.532"/>
<dbReference type="eggNOG" id="COG0130">
    <property type="taxonomic scope" value="Bacteria"/>
</dbReference>
<dbReference type="HOGENOM" id="CLU_032087_0_3_6"/>
<dbReference type="OrthoDB" id="9802309at2"/>
<dbReference type="Proteomes" id="UP000000642">
    <property type="component" value="Chromosome"/>
</dbReference>
<dbReference type="GO" id="GO:0003723">
    <property type="term" value="F:RNA binding"/>
    <property type="evidence" value="ECO:0007669"/>
    <property type="project" value="InterPro"/>
</dbReference>
<dbReference type="GO" id="GO:0160148">
    <property type="term" value="F:tRNA pseudouridine(55) synthase activity"/>
    <property type="evidence" value="ECO:0007669"/>
    <property type="project" value="UniProtKB-EC"/>
</dbReference>
<dbReference type="GO" id="GO:1990481">
    <property type="term" value="P:mRNA pseudouridine synthesis"/>
    <property type="evidence" value="ECO:0007669"/>
    <property type="project" value="TreeGrafter"/>
</dbReference>
<dbReference type="GO" id="GO:0031119">
    <property type="term" value="P:tRNA pseudouridine synthesis"/>
    <property type="evidence" value="ECO:0007669"/>
    <property type="project" value="UniProtKB-UniRule"/>
</dbReference>
<dbReference type="CDD" id="cd02573">
    <property type="entry name" value="PseudoU_synth_EcTruB"/>
    <property type="match status" value="1"/>
</dbReference>
<dbReference type="CDD" id="cd21152">
    <property type="entry name" value="PUA_TruB_bacterial"/>
    <property type="match status" value="1"/>
</dbReference>
<dbReference type="FunFam" id="2.30.130.10:FF:000004">
    <property type="entry name" value="tRNA pseudouridine synthase B"/>
    <property type="match status" value="1"/>
</dbReference>
<dbReference type="FunFam" id="3.30.2350.10:FF:000003">
    <property type="entry name" value="tRNA pseudouridine synthase B"/>
    <property type="match status" value="1"/>
</dbReference>
<dbReference type="Gene3D" id="3.30.2350.10">
    <property type="entry name" value="Pseudouridine synthase"/>
    <property type="match status" value="1"/>
</dbReference>
<dbReference type="Gene3D" id="2.30.130.10">
    <property type="entry name" value="PUA domain"/>
    <property type="match status" value="1"/>
</dbReference>
<dbReference type="HAMAP" id="MF_01080">
    <property type="entry name" value="TruB_bact"/>
    <property type="match status" value="1"/>
</dbReference>
<dbReference type="InterPro" id="IPR020103">
    <property type="entry name" value="PsdUridine_synth_cat_dom_sf"/>
</dbReference>
<dbReference type="InterPro" id="IPR002501">
    <property type="entry name" value="PsdUridine_synth_N"/>
</dbReference>
<dbReference type="InterPro" id="IPR015947">
    <property type="entry name" value="PUA-like_sf"/>
</dbReference>
<dbReference type="InterPro" id="IPR036974">
    <property type="entry name" value="PUA_sf"/>
</dbReference>
<dbReference type="InterPro" id="IPR014780">
    <property type="entry name" value="tRNA_psdUridine_synth_TruB"/>
</dbReference>
<dbReference type="InterPro" id="IPR015240">
    <property type="entry name" value="tRNA_sdUridine_synth_fam1_C"/>
</dbReference>
<dbReference type="InterPro" id="IPR032819">
    <property type="entry name" value="TruB_C"/>
</dbReference>
<dbReference type="NCBIfam" id="TIGR00431">
    <property type="entry name" value="TruB"/>
    <property type="match status" value="1"/>
</dbReference>
<dbReference type="PANTHER" id="PTHR13767:SF2">
    <property type="entry name" value="PSEUDOURIDYLATE SYNTHASE TRUB1"/>
    <property type="match status" value="1"/>
</dbReference>
<dbReference type="PANTHER" id="PTHR13767">
    <property type="entry name" value="TRNA-PSEUDOURIDINE SYNTHASE"/>
    <property type="match status" value="1"/>
</dbReference>
<dbReference type="Pfam" id="PF09157">
    <property type="entry name" value="TruB-C_2"/>
    <property type="match status" value="1"/>
</dbReference>
<dbReference type="Pfam" id="PF16198">
    <property type="entry name" value="TruB_C_2"/>
    <property type="match status" value="1"/>
</dbReference>
<dbReference type="Pfam" id="PF01509">
    <property type="entry name" value="TruB_N"/>
    <property type="match status" value="1"/>
</dbReference>
<dbReference type="SUPFAM" id="SSF55120">
    <property type="entry name" value="Pseudouridine synthase"/>
    <property type="match status" value="1"/>
</dbReference>
<dbReference type="SUPFAM" id="SSF88697">
    <property type="entry name" value="PUA domain-like"/>
    <property type="match status" value="1"/>
</dbReference>
<name>TRUB_YERE8</name>
<comment type="function">
    <text evidence="1">Responsible for synthesis of pseudouridine from uracil-55 in the psi GC loop of transfer RNAs.</text>
</comment>
<comment type="catalytic activity">
    <reaction evidence="1">
        <text>uridine(55) in tRNA = pseudouridine(55) in tRNA</text>
        <dbReference type="Rhea" id="RHEA:42532"/>
        <dbReference type="Rhea" id="RHEA-COMP:10101"/>
        <dbReference type="Rhea" id="RHEA-COMP:10102"/>
        <dbReference type="ChEBI" id="CHEBI:65314"/>
        <dbReference type="ChEBI" id="CHEBI:65315"/>
        <dbReference type="EC" id="5.4.99.25"/>
    </reaction>
</comment>
<comment type="similarity">
    <text evidence="1">Belongs to the pseudouridine synthase TruB family. Type 1 subfamily.</text>
</comment>
<gene>
    <name evidence="1" type="primary">truB</name>
    <name type="ordered locus">YE0436</name>
</gene>